<keyword id="KW-0997">Cell inner membrane</keyword>
<keyword id="KW-1003">Cell membrane</keyword>
<keyword id="KW-0472">Membrane</keyword>
<keyword id="KW-0812">Transmembrane</keyword>
<keyword id="KW-1133">Transmembrane helix</keyword>
<reference key="1">
    <citation type="journal article" date="2008" name="J. Bacteriol.">
        <title>Insights into the environmental resistance gene pool from the genome sequence of the multidrug-resistant environmental isolate Escherichia coli SMS-3-5.</title>
        <authorList>
            <person name="Fricke W.F."/>
            <person name="Wright M.S."/>
            <person name="Lindell A.H."/>
            <person name="Harkins D.M."/>
            <person name="Baker-Austin C."/>
            <person name="Ravel J."/>
            <person name="Stepanauskas R."/>
        </authorList>
    </citation>
    <scope>NUCLEOTIDE SEQUENCE [LARGE SCALE GENOMIC DNA]</scope>
    <source>
        <strain>SMS-3-5 / SECEC</strain>
    </source>
</reference>
<sequence>MINPNPKRSDEPVFWGLFGAGGMWSAIIAPVMILLVGILLPLGLFPGDALSYERVLAFAQSFIGRVFLFLMIVLPLWCGLHRMHHAMHDLKIHVPAGKWVFYGLAAILTVVTLIGVVTI</sequence>
<protein>
    <recommendedName>
        <fullName evidence="1">Fumarate reductase subunit D</fullName>
    </recommendedName>
    <alternativeName>
        <fullName evidence="1">Fumarate reductase 13 kDa hydrophobic protein</fullName>
    </alternativeName>
    <alternativeName>
        <fullName evidence="1">Quinol-fumarate reductase subunit D</fullName>
        <shortName evidence="1">QFR subunit D</shortName>
    </alternativeName>
</protein>
<evidence type="ECO:0000255" key="1">
    <source>
        <dbReference type="HAMAP-Rule" id="MF_00709"/>
    </source>
</evidence>
<comment type="function">
    <text evidence="1">Two distinct, membrane-bound, FAD-containing enzymes are responsible for the catalysis of fumarate and succinate interconversion; fumarate reductase is used in anaerobic growth, and succinate dehydrogenase is used in aerobic growth. Anchors the catalytic components of the fumarate reductase complex to the cell inner membrane, binds quinones.</text>
</comment>
<comment type="subunit">
    <text evidence="1">Part of an enzyme complex containing four subunits: a flavoprotein (FrdA), an iron-sulfur protein (FrdB), and two hydrophobic anchor proteins (FrdC and FrdD).</text>
</comment>
<comment type="subcellular location">
    <subcellularLocation>
        <location evidence="1">Cell inner membrane</location>
        <topology evidence="1">Multi-pass membrane protein</topology>
    </subcellularLocation>
</comment>
<comment type="similarity">
    <text evidence="1">Belongs to the FrdD family.</text>
</comment>
<proteinExistence type="inferred from homology"/>
<dbReference type="EMBL" id="CP000970">
    <property type="protein sequence ID" value="ACB17420.1"/>
    <property type="molecule type" value="Genomic_DNA"/>
</dbReference>
<dbReference type="RefSeq" id="WP_000609663.1">
    <property type="nucleotide sequence ID" value="NC_010498.1"/>
</dbReference>
<dbReference type="SMR" id="B1LQH4"/>
<dbReference type="GeneID" id="75169672"/>
<dbReference type="KEGG" id="ecm:EcSMS35_4622"/>
<dbReference type="HOGENOM" id="CLU_168367_0_0_6"/>
<dbReference type="Proteomes" id="UP000007011">
    <property type="component" value="Chromosome"/>
</dbReference>
<dbReference type="GO" id="GO:0045283">
    <property type="term" value="C:fumarate reductase complex"/>
    <property type="evidence" value="ECO:0007669"/>
    <property type="project" value="UniProtKB-UniRule"/>
</dbReference>
<dbReference type="GO" id="GO:0005886">
    <property type="term" value="C:plasma membrane"/>
    <property type="evidence" value="ECO:0007669"/>
    <property type="project" value="UniProtKB-SubCell"/>
</dbReference>
<dbReference type="GO" id="GO:0000104">
    <property type="term" value="F:succinate dehydrogenase activity"/>
    <property type="evidence" value="ECO:0007669"/>
    <property type="project" value="UniProtKB-UniRule"/>
</dbReference>
<dbReference type="GO" id="GO:0006106">
    <property type="term" value="P:fumarate metabolic process"/>
    <property type="evidence" value="ECO:0007669"/>
    <property type="project" value="InterPro"/>
</dbReference>
<dbReference type="CDD" id="cd00547">
    <property type="entry name" value="QFR_TypeD_subunitD"/>
    <property type="match status" value="1"/>
</dbReference>
<dbReference type="FunFam" id="1.20.1300.10:FF:000002">
    <property type="entry name" value="Fumarate reductase subunit D"/>
    <property type="match status" value="1"/>
</dbReference>
<dbReference type="Gene3D" id="1.20.1300.10">
    <property type="entry name" value="Fumarate reductase/succinate dehydrogenase, transmembrane subunit"/>
    <property type="match status" value="1"/>
</dbReference>
<dbReference type="HAMAP" id="MF_00709">
    <property type="entry name" value="Fumarate_red_D"/>
    <property type="match status" value="1"/>
</dbReference>
<dbReference type="InterPro" id="IPR003418">
    <property type="entry name" value="Fumarate_red_D"/>
</dbReference>
<dbReference type="InterPro" id="IPR034804">
    <property type="entry name" value="SQR/QFR_C/D"/>
</dbReference>
<dbReference type="NCBIfam" id="NF003977">
    <property type="entry name" value="PRK05470.1-1"/>
    <property type="match status" value="1"/>
</dbReference>
<dbReference type="Pfam" id="PF02313">
    <property type="entry name" value="Fumarate_red_D"/>
    <property type="match status" value="1"/>
</dbReference>
<dbReference type="PIRSF" id="PIRSF000179">
    <property type="entry name" value="FrdD"/>
    <property type="match status" value="1"/>
</dbReference>
<dbReference type="SUPFAM" id="SSF81343">
    <property type="entry name" value="Fumarate reductase respiratory complex transmembrane subunits"/>
    <property type="match status" value="1"/>
</dbReference>
<gene>
    <name evidence="1" type="primary">frdD</name>
    <name type="ordered locus">EcSMS35_4622</name>
</gene>
<name>FRDD_ECOSM</name>
<organism>
    <name type="scientific">Escherichia coli (strain SMS-3-5 / SECEC)</name>
    <dbReference type="NCBI Taxonomy" id="439855"/>
    <lineage>
        <taxon>Bacteria</taxon>
        <taxon>Pseudomonadati</taxon>
        <taxon>Pseudomonadota</taxon>
        <taxon>Gammaproteobacteria</taxon>
        <taxon>Enterobacterales</taxon>
        <taxon>Enterobacteriaceae</taxon>
        <taxon>Escherichia</taxon>
    </lineage>
</organism>
<accession>B1LQH4</accession>
<feature type="chain" id="PRO_1000132403" description="Fumarate reductase subunit D">
    <location>
        <begin position="1"/>
        <end position="119"/>
    </location>
</feature>
<feature type="transmembrane region" description="Helical" evidence="1">
    <location>
        <begin position="26"/>
        <end position="46"/>
    </location>
</feature>
<feature type="transmembrane region" description="Helical" evidence="1">
    <location>
        <begin position="55"/>
        <end position="75"/>
    </location>
</feature>
<feature type="transmembrane region" description="Helical" evidence="1">
    <location>
        <begin position="99"/>
        <end position="119"/>
    </location>
</feature>